<comment type="function">
    <text evidence="1">An essential GTPase which binds GTP, GDP and possibly (p)ppGpp with moderate affinity, with high nucleotide exchange rates and a fairly low GTP hydrolysis rate. Plays a role in control of the cell cycle, stress response, ribosome biogenesis and in those bacteria that undergo differentiation, in morphogenesis control.</text>
</comment>
<comment type="cofactor">
    <cofactor evidence="1">
        <name>Mg(2+)</name>
        <dbReference type="ChEBI" id="CHEBI:18420"/>
    </cofactor>
</comment>
<comment type="subunit">
    <text evidence="1">Monomer.</text>
</comment>
<comment type="subcellular location">
    <subcellularLocation>
        <location evidence="1">Cytoplasm</location>
    </subcellularLocation>
</comment>
<comment type="similarity">
    <text evidence="1">Belongs to the TRAFAC class OBG-HflX-like GTPase superfamily. OBG GTPase family.</text>
</comment>
<gene>
    <name evidence="1" type="primary">obg</name>
</gene>
<name>OBG_CORML</name>
<organism>
    <name type="scientific">Corynebacterium melassecola</name>
    <dbReference type="NCBI Taxonomy" id="41643"/>
    <lineage>
        <taxon>Bacteria</taxon>
        <taxon>Bacillati</taxon>
        <taxon>Actinomycetota</taxon>
        <taxon>Actinomycetes</taxon>
        <taxon>Mycobacteriales</taxon>
        <taxon>Corynebacteriaceae</taxon>
        <taxon>Corynebacterium</taxon>
    </lineage>
</organism>
<accession>P0C1E7</accession>
<accession>P46584</accession>
<keyword id="KW-0963">Cytoplasm</keyword>
<keyword id="KW-0342">GTP-binding</keyword>
<keyword id="KW-0378">Hydrolase</keyword>
<keyword id="KW-0547">Nucleotide-binding</keyword>
<feature type="chain" id="PRO_0000236034" description="GTPase Obg">
    <location>
        <begin position="1"/>
        <end position="221"/>
    </location>
</feature>
<feature type="domain" description="OBG-type G" evidence="1">
    <location>
        <begin position="1"/>
        <end position="61"/>
    </location>
</feature>
<feature type="domain" description="OCT" evidence="2">
    <location>
        <begin position="82"/>
        <end position="162"/>
    </location>
</feature>
<feature type="binding site" evidence="1">
    <location>
        <begin position="10"/>
        <end position="13"/>
    </location>
    <ligand>
        <name>GTP</name>
        <dbReference type="ChEBI" id="CHEBI:37565"/>
    </ligand>
</feature>
<feature type="binding site" evidence="1">
    <location>
        <begin position="42"/>
        <end position="44"/>
    </location>
    <ligand>
        <name>GTP</name>
        <dbReference type="ChEBI" id="CHEBI:37565"/>
    </ligand>
</feature>
<feature type="non-terminal residue">
    <location>
        <position position="1"/>
    </location>
</feature>
<evidence type="ECO:0000250" key="1">
    <source>
        <dbReference type="UniProtKB" id="P42641"/>
    </source>
</evidence>
<evidence type="ECO:0000255" key="2">
    <source>
        <dbReference type="PROSITE-ProRule" id="PRU01229"/>
    </source>
</evidence>
<protein>
    <recommendedName>
        <fullName evidence="1">GTPase Obg</fullName>
        <ecNumber evidence="1">3.6.5.-</ecNumber>
    </recommendedName>
    <alternativeName>
        <fullName evidence="1">GTP-binding protein Obg</fullName>
    </alternativeName>
</protein>
<dbReference type="EC" id="3.6.5.-" evidence="1"/>
<dbReference type="EMBL" id="U31230">
    <property type="protein sequence ID" value="AAC44173.1"/>
    <property type="molecule type" value="Genomic_DNA"/>
</dbReference>
<dbReference type="SMR" id="P0C1E7"/>
<dbReference type="GO" id="GO:0005737">
    <property type="term" value="C:cytoplasm"/>
    <property type="evidence" value="ECO:0007669"/>
    <property type="project" value="UniProtKB-SubCell"/>
</dbReference>
<dbReference type="GO" id="GO:0005525">
    <property type="term" value="F:GTP binding"/>
    <property type="evidence" value="ECO:0007669"/>
    <property type="project" value="UniProtKB-KW"/>
</dbReference>
<dbReference type="GO" id="GO:0016787">
    <property type="term" value="F:hydrolase activity"/>
    <property type="evidence" value="ECO:0007669"/>
    <property type="project" value="UniProtKB-KW"/>
</dbReference>
<dbReference type="Gene3D" id="3.30.300.350">
    <property type="entry name" value="GTP-binding protein OBG, C-terminal domain"/>
    <property type="match status" value="1"/>
</dbReference>
<dbReference type="Gene3D" id="3.40.50.300">
    <property type="entry name" value="P-loop containing nucleotide triphosphate hydrolases"/>
    <property type="match status" value="1"/>
</dbReference>
<dbReference type="InterPro" id="IPR031167">
    <property type="entry name" value="G_OBG"/>
</dbReference>
<dbReference type="InterPro" id="IPR036346">
    <property type="entry name" value="GTP-bd_prot_GTP1/OBG_C_sf"/>
</dbReference>
<dbReference type="InterPro" id="IPR015349">
    <property type="entry name" value="OCT_dom"/>
</dbReference>
<dbReference type="InterPro" id="IPR027417">
    <property type="entry name" value="P-loop_NTPase"/>
</dbReference>
<dbReference type="NCBIfam" id="TIGR03595">
    <property type="entry name" value="Obg_CgtA_exten"/>
    <property type="match status" value="1"/>
</dbReference>
<dbReference type="Pfam" id="PF09269">
    <property type="entry name" value="DUF1967"/>
    <property type="match status" value="1"/>
</dbReference>
<dbReference type="SUPFAM" id="SSF102741">
    <property type="entry name" value="Obg GTP-binding protein C-terminal domain"/>
    <property type="match status" value="1"/>
</dbReference>
<dbReference type="PROSITE" id="PS51710">
    <property type="entry name" value="G_OBG"/>
    <property type="match status" value="1"/>
</dbReference>
<dbReference type="PROSITE" id="PS51881">
    <property type="entry name" value="OCT"/>
    <property type="match status" value="1"/>
</dbReference>
<reference key="1">
    <citation type="journal article" date="1996" name="J. Bacteriol.">
        <title>Mutations in the Corynebacterium glutamicum proline biosynthetic pathway: a natural bypass of the proA step.</title>
        <authorList>
            <person name="Ankri S."/>
            <person name="Serebrijski I."/>
            <person name="Reyes O."/>
            <person name="Leblon G."/>
        </authorList>
    </citation>
    <scope>NUCLEOTIDE SEQUENCE [GENOMIC DNA]</scope>
    <source>
        <strain>ATCC 17965 / AS B-4821</strain>
    </source>
</reference>
<sequence length="221" mass="24716">PSALRLVLLNKADAPEALKSFAEVLKVRLFEKQFGWPVFIISAVARKALDPLKYKLLEIVQDARKKRPKEKAESVIIKPKAVVHRTKGQFQIKPDPEVQGGFIITGEKPERWILQTDFENDEAVGYLADRLSKLGIEDGLRKAGAHVGANVTIGGISFEWEPMTTAGDDPILTGRGTDVRLEQTSRISAAERKRASQVRRGLIDELDYGEDQEASRERWEG</sequence>
<proteinExistence type="inferred from homology"/>